<evidence type="ECO:0000255" key="1">
    <source>
        <dbReference type="HAMAP-Rule" id="MF_01200"/>
    </source>
</evidence>
<protein>
    <recommendedName>
        <fullName evidence="1">Orotidine 5'-phosphate decarboxylase</fullName>
        <ecNumber evidence="1">4.1.1.23</ecNumber>
    </recommendedName>
    <alternativeName>
        <fullName evidence="1">OMP decarboxylase</fullName>
        <shortName evidence="1">OMPDCase</shortName>
        <shortName evidence="1">OMPdecase</shortName>
    </alternativeName>
</protein>
<organism>
    <name type="scientific">Shigella dysenteriae serotype 1 (strain Sd197)</name>
    <dbReference type="NCBI Taxonomy" id="300267"/>
    <lineage>
        <taxon>Bacteria</taxon>
        <taxon>Pseudomonadati</taxon>
        <taxon>Pseudomonadota</taxon>
        <taxon>Gammaproteobacteria</taxon>
        <taxon>Enterobacterales</taxon>
        <taxon>Enterobacteriaceae</taxon>
        <taxon>Shigella</taxon>
    </lineage>
</organism>
<dbReference type="EC" id="4.1.1.23" evidence="1"/>
<dbReference type="EMBL" id="CP000034">
    <property type="protein sequence ID" value="ABB61503.1"/>
    <property type="molecule type" value="Genomic_DNA"/>
</dbReference>
<dbReference type="RefSeq" id="WP_000176280.1">
    <property type="nucleotide sequence ID" value="NC_007606.1"/>
</dbReference>
<dbReference type="RefSeq" id="YP_402994.1">
    <property type="nucleotide sequence ID" value="NC_007606.1"/>
</dbReference>
<dbReference type="SMR" id="Q32GQ2"/>
<dbReference type="STRING" id="300267.SDY_1357"/>
<dbReference type="EnsemblBacteria" id="ABB61503">
    <property type="protein sequence ID" value="ABB61503"/>
    <property type="gene ID" value="SDY_1357"/>
</dbReference>
<dbReference type="KEGG" id="sdy:SDY_1357"/>
<dbReference type="PATRIC" id="fig|300267.13.peg.1608"/>
<dbReference type="HOGENOM" id="CLU_067069_0_0_6"/>
<dbReference type="UniPathway" id="UPA00070">
    <property type="reaction ID" value="UER00120"/>
</dbReference>
<dbReference type="Proteomes" id="UP000002716">
    <property type="component" value="Chromosome"/>
</dbReference>
<dbReference type="GO" id="GO:0005829">
    <property type="term" value="C:cytosol"/>
    <property type="evidence" value="ECO:0007669"/>
    <property type="project" value="TreeGrafter"/>
</dbReference>
<dbReference type="GO" id="GO:0004590">
    <property type="term" value="F:orotidine-5'-phosphate decarboxylase activity"/>
    <property type="evidence" value="ECO:0007669"/>
    <property type="project" value="UniProtKB-UniRule"/>
</dbReference>
<dbReference type="GO" id="GO:0006207">
    <property type="term" value="P:'de novo' pyrimidine nucleobase biosynthetic process"/>
    <property type="evidence" value="ECO:0007669"/>
    <property type="project" value="InterPro"/>
</dbReference>
<dbReference type="GO" id="GO:0044205">
    <property type="term" value="P:'de novo' UMP biosynthetic process"/>
    <property type="evidence" value="ECO:0007669"/>
    <property type="project" value="UniProtKB-UniRule"/>
</dbReference>
<dbReference type="CDD" id="cd04725">
    <property type="entry name" value="OMP_decarboxylase_like"/>
    <property type="match status" value="1"/>
</dbReference>
<dbReference type="FunFam" id="3.20.20.70:FF:000015">
    <property type="entry name" value="Orotidine 5'-phosphate decarboxylase"/>
    <property type="match status" value="1"/>
</dbReference>
<dbReference type="Gene3D" id="3.20.20.70">
    <property type="entry name" value="Aldolase class I"/>
    <property type="match status" value="1"/>
</dbReference>
<dbReference type="HAMAP" id="MF_01200_B">
    <property type="entry name" value="OMPdecase_type1_B"/>
    <property type="match status" value="1"/>
</dbReference>
<dbReference type="InterPro" id="IPR013785">
    <property type="entry name" value="Aldolase_TIM"/>
</dbReference>
<dbReference type="InterPro" id="IPR014732">
    <property type="entry name" value="OMPdecase"/>
</dbReference>
<dbReference type="InterPro" id="IPR018089">
    <property type="entry name" value="OMPdecase_AS"/>
</dbReference>
<dbReference type="InterPro" id="IPR047596">
    <property type="entry name" value="OMPdecase_bac"/>
</dbReference>
<dbReference type="InterPro" id="IPR001754">
    <property type="entry name" value="OMPdeCOase_dom"/>
</dbReference>
<dbReference type="InterPro" id="IPR011060">
    <property type="entry name" value="RibuloseP-bd_barrel"/>
</dbReference>
<dbReference type="NCBIfam" id="NF001273">
    <property type="entry name" value="PRK00230.1"/>
    <property type="match status" value="1"/>
</dbReference>
<dbReference type="NCBIfam" id="TIGR01740">
    <property type="entry name" value="pyrF"/>
    <property type="match status" value="1"/>
</dbReference>
<dbReference type="PANTHER" id="PTHR32119">
    <property type="entry name" value="OROTIDINE 5'-PHOSPHATE DECARBOXYLASE"/>
    <property type="match status" value="1"/>
</dbReference>
<dbReference type="PANTHER" id="PTHR32119:SF2">
    <property type="entry name" value="OROTIDINE 5'-PHOSPHATE DECARBOXYLASE"/>
    <property type="match status" value="1"/>
</dbReference>
<dbReference type="Pfam" id="PF00215">
    <property type="entry name" value="OMPdecase"/>
    <property type="match status" value="1"/>
</dbReference>
<dbReference type="SMART" id="SM00934">
    <property type="entry name" value="OMPdecase"/>
    <property type="match status" value="1"/>
</dbReference>
<dbReference type="SUPFAM" id="SSF51366">
    <property type="entry name" value="Ribulose-phoshate binding barrel"/>
    <property type="match status" value="1"/>
</dbReference>
<dbReference type="PROSITE" id="PS00156">
    <property type="entry name" value="OMPDECASE"/>
    <property type="match status" value="1"/>
</dbReference>
<sequence>MTLTASSSSRAVTNSPVVVALDYHNRDDALSFVDKIDPRDCRLKVGKEMFTLFGPQFVRELQQRGFDIFLDLKFHDIPNTAAHAVAAAADLGVWMVNVHASGGARMMTAAREALVPYGKDAPLLIAVTVLTSMEASDLADLGVTLSPADYAERLAALTQKCGFDGVVCSAQEAVRFKQVFGQEFKLVTPGIRPQGSDAGDQRRIMTPEQALAAGVDYMVIGRPVTQSVDPAQTLKAINASLQRSA</sequence>
<accession>Q32GQ2</accession>
<proteinExistence type="inferred from homology"/>
<reference key="1">
    <citation type="journal article" date="2005" name="Nucleic Acids Res.">
        <title>Genome dynamics and diversity of Shigella species, the etiologic agents of bacillary dysentery.</title>
        <authorList>
            <person name="Yang F."/>
            <person name="Yang J."/>
            <person name="Zhang X."/>
            <person name="Chen L."/>
            <person name="Jiang Y."/>
            <person name="Yan Y."/>
            <person name="Tang X."/>
            <person name="Wang J."/>
            <person name="Xiong Z."/>
            <person name="Dong J."/>
            <person name="Xue Y."/>
            <person name="Zhu Y."/>
            <person name="Xu X."/>
            <person name="Sun L."/>
            <person name="Chen S."/>
            <person name="Nie H."/>
            <person name="Peng J."/>
            <person name="Xu J."/>
            <person name="Wang Y."/>
            <person name="Yuan Z."/>
            <person name="Wen Y."/>
            <person name="Yao Z."/>
            <person name="Shen Y."/>
            <person name="Qiang B."/>
            <person name="Hou Y."/>
            <person name="Yu J."/>
            <person name="Jin Q."/>
        </authorList>
    </citation>
    <scope>NUCLEOTIDE SEQUENCE [LARGE SCALE GENOMIC DNA]</scope>
    <source>
        <strain>Sd197</strain>
    </source>
</reference>
<name>PYRF_SHIDS</name>
<feature type="chain" id="PRO_0000241906" description="Orotidine 5'-phosphate decarboxylase">
    <location>
        <begin position="1"/>
        <end position="245"/>
    </location>
</feature>
<feature type="active site" description="Proton donor" evidence="1">
    <location>
        <position position="73"/>
    </location>
</feature>
<feature type="binding site" evidence="1">
    <location>
        <position position="22"/>
    </location>
    <ligand>
        <name>substrate</name>
    </ligand>
</feature>
<feature type="binding site" evidence="1">
    <location>
        <position position="44"/>
    </location>
    <ligand>
        <name>substrate</name>
    </ligand>
</feature>
<feature type="binding site" evidence="1">
    <location>
        <begin position="71"/>
        <end position="80"/>
    </location>
    <ligand>
        <name>substrate</name>
    </ligand>
</feature>
<feature type="binding site" evidence="1">
    <location>
        <position position="131"/>
    </location>
    <ligand>
        <name>substrate</name>
    </ligand>
</feature>
<feature type="binding site" evidence="1">
    <location>
        <position position="192"/>
    </location>
    <ligand>
        <name>substrate</name>
    </ligand>
</feature>
<feature type="binding site" evidence="1">
    <location>
        <position position="201"/>
    </location>
    <ligand>
        <name>substrate</name>
    </ligand>
</feature>
<feature type="binding site" evidence="1">
    <location>
        <position position="221"/>
    </location>
    <ligand>
        <name>substrate</name>
    </ligand>
</feature>
<feature type="binding site" evidence="1">
    <location>
        <position position="222"/>
    </location>
    <ligand>
        <name>substrate</name>
    </ligand>
</feature>
<gene>
    <name evidence="1" type="primary">pyrF</name>
    <name type="ordered locus">SDY_1357</name>
</gene>
<comment type="function">
    <text evidence="1">Catalyzes the decarboxylation of orotidine 5'-monophosphate (OMP) to uridine 5'-monophosphate (UMP).</text>
</comment>
<comment type="catalytic activity">
    <reaction evidence="1">
        <text>orotidine 5'-phosphate + H(+) = UMP + CO2</text>
        <dbReference type="Rhea" id="RHEA:11596"/>
        <dbReference type="ChEBI" id="CHEBI:15378"/>
        <dbReference type="ChEBI" id="CHEBI:16526"/>
        <dbReference type="ChEBI" id="CHEBI:57538"/>
        <dbReference type="ChEBI" id="CHEBI:57865"/>
        <dbReference type="EC" id="4.1.1.23"/>
    </reaction>
</comment>
<comment type="pathway">
    <text evidence="1">Pyrimidine metabolism; UMP biosynthesis via de novo pathway; UMP from orotate: step 2/2.</text>
</comment>
<comment type="subunit">
    <text evidence="1">Homodimer.</text>
</comment>
<comment type="similarity">
    <text evidence="1">Belongs to the OMP decarboxylase family. Type 1 subfamily.</text>
</comment>
<keyword id="KW-0210">Decarboxylase</keyword>
<keyword id="KW-0456">Lyase</keyword>
<keyword id="KW-0665">Pyrimidine biosynthesis</keyword>
<keyword id="KW-1185">Reference proteome</keyword>